<dbReference type="EMBL" id="AE005672">
    <property type="protein sequence ID" value="AAK75832.1"/>
    <property type="molecule type" value="Genomic_DNA"/>
</dbReference>
<dbReference type="RefSeq" id="WP_000571767.1">
    <property type="nucleotide sequence ID" value="NZ_CP155539.1"/>
</dbReference>
<dbReference type="SMR" id="A0A0H2UR90"/>
<dbReference type="PaxDb" id="170187-SP_1757"/>
<dbReference type="EnsemblBacteria" id="AAK75832">
    <property type="protein sequence ID" value="AAK75832"/>
    <property type="gene ID" value="SP_1757"/>
</dbReference>
<dbReference type="KEGG" id="spn:SP_1757"/>
<dbReference type="eggNOG" id="COG0438">
    <property type="taxonomic scope" value="Bacteria"/>
</dbReference>
<dbReference type="BioCyc" id="SPNE170187:G1FZB-1782-MONOMER"/>
<dbReference type="UniPathway" id="UPA00378"/>
<dbReference type="Proteomes" id="UP000000585">
    <property type="component" value="Chromosome"/>
</dbReference>
<dbReference type="GO" id="GO:0005886">
    <property type="term" value="C:plasma membrane"/>
    <property type="evidence" value="ECO:0007669"/>
    <property type="project" value="UniProtKB-SubCell"/>
</dbReference>
<dbReference type="GO" id="GO:0017122">
    <property type="term" value="C:protein N-acetylglucosaminyltransferase complex"/>
    <property type="evidence" value="ECO:0000314"/>
    <property type="project" value="UniProtKB"/>
</dbReference>
<dbReference type="GO" id="GO:0018242">
    <property type="term" value="P:protein O-linked glycosylation via serine"/>
    <property type="evidence" value="ECO:0007669"/>
    <property type="project" value="UniProtKB-UniRule"/>
</dbReference>
<dbReference type="GO" id="GO:0031647">
    <property type="term" value="P:regulation of protein stability"/>
    <property type="evidence" value="ECO:0007669"/>
    <property type="project" value="UniProtKB-UniRule"/>
</dbReference>
<dbReference type="HAMAP" id="MF_01473">
    <property type="entry name" value="GtfB"/>
    <property type="match status" value="1"/>
</dbReference>
<dbReference type="InterPro" id="IPR014268">
    <property type="entry name" value="GtfB"/>
</dbReference>
<dbReference type="NCBIfam" id="TIGR02919">
    <property type="entry name" value="accessory Sec system glycosylation chaperone GtfB"/>
    <property type="match status" value="1"/>
</dbReference>
<organism>
    <name type="scientific">Streptococcus pneumoniae serotype 4 (strain ATCC BAA-334 / TIGR4)</name>
    <dbReference type="NCBI Taxonomy" id="170187"/>
    <lineage>
        <taxon>Bacteria</taxon>
        <taxon>Bacillati</taxon>
        <taxon>Bacillota</taxon>
        <taxon>Bacilli</taxon>
        <taxon>Lactobacillales</taxon>
        <taxon>Streptococcaceae</taxon>
        <taxon>Streptococcus</taxon>
    </lineage>
</organism>
<comment type="function">
    <text evidence="1 2 3">Required for the polymorphic O-glycosylation of the serine-rich repeat protein PsrP. A stabilizing protein that is part of the accessory SecA2/SecY2 system specifically required to export serine-rich repeat cell wall proteins encoded upstream in the same operon. The GtfA-GtfB complex adds GlcNAc from UDP-GlcNAc to PsrP, attaching the first sugar residue. Stabilizes the glycosylation activity of GtfA (By similarity) (PubMed:24936067, PubMed:28246170). Has no N-acetylglucosaminyl transferase activity on its own (PubMed:24936067).</text>
</comment>
<comment type="pathway">
    <text evidence="1 2 3">Protein modification; protein glycosylation.</text>
</comment>
<comment type="subunit">
    <text evidence="1 2">Interacts with glycosyltransferase GtfA; probably forms a heterotetramer with 2 subunits each of GtfA and GtfB. Part of the accessory SecA2/SecY2 protein translocation apparatus.</text>
</comment>
<comment type="subcellular location">
    <subcellularLocation>
        <location evidence="1">Cell membrane</location>
        <topology evidence="1">Peripheral membrane protein</topology>
    </subcellularLocation>
</comment>
<comment type="domain">
    <text evidence="2">The N-terminus of the protein, including the glycosyltransferase 1 domain (residues 1-171), is required but not sufficient for full formation of the stable GtfA-GtfB complex; the complex of GtfA with truncated GtfB has intermediate N-acetylglucosaminyl transferase activity.</text>
</comment>
<comment type="miscellaneous">
    <text evidence="4 5 7">Encoded in RD10, a pathogenicity island with an atypical GC content that is associated with invasive pneumococcal disease. Pathogenicity islands account for greater than half the genomic diversity observed between isolates (PubMed:11463916, PubMed:16861665). The main function of this island seems to be correct synthesis and export of pneumococcal serine-rich repeat protein PsrP (Probable).</text>
</comment>
<comment type="similarity">
    <text evidence="1">Belongs to the GtfB family.</text>
</comment>
<feature type="chain" id="PRO_0000447203" description="UDP-N-acetylglucosamine--peptide N-acetylglucosaminyltransferase stabilizing protein GtfB">
    <location>
        <begin position="1"/>
        <end position="445"/>
    </location>
</feature>
<feature type="region of interest" description="Glycosyltransferase 1" evidence="2">
    <location>
        <begin position="55"/>
        <end position="171"/>
    </location>
</feature>
<protein>
    <recommendedName>
        <fullName evidence="1">UDP-N-acetylglucosamine--peptide N-acetylglucosaminyltransferase stabilizing protein GtfB</fullName>
    </recommendedName>
    <alternativeName>
        <fullName evidence="1 6">Glycosyltransferase stabilizing protein GtfB</fullName>
    </alternativeName>
</protein>
<sequence>MIELYDSYSQESRDLHESLGATGLSQLGVVIDADGFLPDGLLSPFTYYLGYEDGKPLYFNQVPVSDFWEILGDNQSACIEDVTQERAVIHYADGMQARLVKQVDWKDLEGRVRQVDHYNRFGACFATTTYSADSEPIMTVYQDVNGQQVLLENHVTGDILLTLPGQSMRYFANKVEFITFFLQDLEIDTSQLIFNTLATPFLVSFHHPDKSGSDVLVWQEPLYDAIPGNMQLILESDNVRTKKIIIPNKATYERALELTDEKYHDQFVHLGYHYQFKRDNFLRRDALILTNSDQIEQVEAIAGALPDVTFRIAAVTEMSSKLLDMLCYPNVALYQNASPQKIQELYQLSDIYLDINHSNELLQAVRQAFEHNLLILGFNQTVHNRLYIAPDHLFESSEVAALVETIKLALSDVDQMRQALGKQGQHANYVDLVRYQETMQTVLGG</sequence>
<reference key="1">
    <citation type="journal article" date="2001" name="Science">
        <title>Complete genome sequence of a virulent isolate of Streptococcus pneumoniae.</title>
        <authorList>
            <person name="Tettelin H."/>
            <person name="Nelson K.E."/>
            <person name="Paulsen I.T."/>
            <person name="Eisen J.A."/>
            <person name="Read T.D."/>
            <person name="Peterson S.N."/>
            <person name="Heidelberg J.F."/>
            <person name="DeBoy R.T."/>
            <person name="Haft D.H."/>
            <person name="Dodson R.J."/>
            <person name="Durkin A.S."/>
            <person name="Gwinn M.L."/>
            <person name="Kolonay J.F."/>
            <person name="Nelson W.C."/>
            <person name="Peterson J.D."/>
            <person name="Umayam L.A."/>
            <person name="White O."/>
            <person name="Salzberg S.L."/>
            <person name="Lewis M.R."/>
            <person name="Radune D."/>
            <person name="Holtzapple E.K."/>
            <person name="Khouri H.M."/>
            <person name="Wolf A.M."/>
            <person name="Utterback T.R."/>
            <person name="Hansen C.L."/>
            <person name="McDonald L.A."/>
            <person name="Feldblyum T.V."/>
            <person name="Angiuoli S.V."/>
            <person name="Dickinson T."/>
            <person name="Hickey E.K."/>
            <person name="Holt I.E."/>
            <person name="Loftus B.J."/>
            <person name="Yang F."/>
            <person name="Smith H.O."/>
            <person name="Venter J.C."/>
            <person name="Dougherty B.A."/>
            <person name="Morrison D.A."/>
            <person name="Hollingshead S.K."/>
            <person name="Fraser C.M."/>
        </authorList>
    </citation>
    <scope>NUCLEOTIDE SEQUENCE [LARGE SCALE GENOMIC DNA]</scope>
    <source>
        <strain>ATCC BAA-334 / TIGR4</strain>
    </source>
</reference>
<reference key="2">
    <citation type="journal article" date="2006" name="Infect. Immun.">
        <title>Identification of a candidate Streptococcus pneumoniae core genome and regions of diversity correlated with invasive pneumococcal disease.</title>
        <authorList>
            <person name="Obert C."/>
            <person name="Sublett J."/>
            <person name="Kaushal D."/>
            <person name="Hinojosa E."/>
            <person name="Barton T."/>
            <person name="Tuomanen E.I."/>
            <person name="Orihuela C.J."/>
        </authorList>
    </citation>
    <scope>DISCUSSION OF SEQUENCE</scope>
    <source>
        <strain>ATCC BAA-334 / TIGR4</strain>
    </source>
</reference>
<reference key="3">
    <citation type="journal article" date="2014" name="J. Biol. Chem.">
        <title>Structure of a novel O-linked N-acetyl-D-glucosamine (O-GlcNAc) transferase, GtfA, reveals insights into the glycosylation of pneumococcal serine-rich repeat adhesins.</title>
        <authorList>
            <person name="Shi W.W."/>
            <person name="Jiang Y.L."/>
            <person name="Zhu F."/>
            <person name="Yang Y.H."/>
            <person name="Shao Q.Y."/>
            <person name="Yang H.B."/>
            <person name="Ren Y.M."/>
            <person name="Wu H."/>
            <person name="Chen Y."/>
            <person name="Zhou C.Z."/>
        </authorList>
    </citation>
    <scope>FUNCTION</scope>
    <scope>PATHWAY</scope>
    <scope>SUBUNIT</scope>
    <scope>DOMAIN</scope>
    <source>
        <strain>ATCC BAA-334 / TIGR4</strain>
    </source>
</reference>
<reference key="4">
    <citation type="journal article" date="2017" name="J. Biol. Chem.">
        <title>Defining the enzymatic pathway for polymorphic O-glycosylation of the pneumococcal serine-rich repeat protein PsrP.</title>
        <authorList>
            <person name="Jiang Y.L."/>
            <person name="Jin H."/>
            <person name="Yang H.B."/>
            <person name="Zhao R.L."/>
            <person name="Wang S."/>
            <person name="Chen Y."/>
            <person name="Zhou C.Z."/>
        </authorList>
    </citation>
    <scope>FUNCTION</scope>
    <scope>PATHWAY</scope>
    <source>
        <strain>ATCC BAA-334 / TIGR4</strain>
    </source>
</reference>
<keyword id="KW-1003">Cell membrane</keyword>
<keyword id="KW-0472">Membrane</keyword>
<keyword id="KW-1185">Reference proteome</keyword>
<name>GTFB_STRPN</name>
<evidence type="ECO:0000255" key="1">
    <source>
        <dbReference type="HAMAP-Rule" id="MF_01473"/>
    </source>
</evidence>
<evidence type="ECO:0000269" key="2">
    <source>
    </source>
</evidence>
<evidence type="ECO:0000269" key="3">
    <source>
    </source>
</evidence>
<evidence type="ECO:0000303" key="4">
    <source>
    </source>
</evidence>
<evidence type="ECO:0000303" key="5">
    <source>
    </source>
</evidence>
<evidence type="ECO:0000303" key="6">
    <source>
    </source>
</evidence>
<evidence type="ECO:0000305" key="7"/>
<accession>A0A0H2UR90</accession>
<proteinExistence type="evidence at protein level"/>
<gene>
    <name evidence="1 6" type="primary">gtfB</name>
    <name type="ordered locus">SP_1757</name>
</gene>